<feature type="signal peptide" evidence="1">
    <location>
        <begin position="1"/>
        <end position="20"/>
    </location>
</feature>
<feature type="chain" id="PRO_0000007429" description="Ecotin">
    <location>
        <begin position="21"/>
        <end position="164"/>
    </location>
</feature>
<feature type="site" description="Reactive bond" evidence="1">
    <location>
        <begin position="106"/>
        <end position="107"/>
    </location>
</feature>
<feature type="disulfide bond" evidence="1">
    <location>
        <begin position="72"/>
        <end position="109"/>
    </location>
</feature>
<protein>
    <recommendedName>
        <fullName evidence="1">Ecotin</fullName>
    </recommendedName>
</protein>
<proteinExistence type="inferred from homology"/>
<organism>
    <name type="scientific">Salmonella paratyphi A (strain ATCC 9150 / SARB42)</name>
    <dbReference type="NCBI Taxonomy" id="295319"/>
    <lineage>
        <taxon>Bacteria</taxon>
        <taxon>Pseudomonadati</taxon>
        <taxon>Pseudomonadota</taxon>
        <taxon>Gammaproteobacteria</taxon>
        <taxon>Enterobacterales</taxon>
        <taxon>Enterobacteriaceae</taxon>
        <taxon>Salmonella</taxon>
    </lineage>
</organism>
<comment type="function">
    <text evidence="1">General inhibitor of pancreatic serine proteases: inhibits chymotrypsin, trypsin, elastases, factor X, kallikrein as well as a variety of other proteases.</text>
</comment>
<comment type="subunit">
    <text evidence="1">Homodimer.</text>
</comment>
<comment type="subcellular location">
    <subcellularLocation>
        <location evidence="1">Periplasm</location>
    </subcellularLocation>
</comment>
<comment type="similarity">
    <text evidence="1">Belongs to the protease inhibitor I11 (ecotin) family.</text>
</comment>
<accession>Q5PI36</accession>
<evidence type="ECO:0000255" key="1">
    <source>
        <dbReference type="HAMAP-Rule" id="MF_00706"/>
    </source>
</evidence>
<dbReference type="EMBL" id="CP000026">
    <property type="protein sequence ID" value="AAV76603.1"/>
    <property type="molecule type" value="Genomic_DNA"/>
</dbReference>
<dbReference type="RefSeq" id="WP_011232985.1">
    <property type="nucleotide sequence ID" value="NC_006511.1"/>
</dbReference>
<dbReference type="SMR" id="Q5PI36"/>
<dbReference type="MEROPS" id="I11.001"/>
<dbReference type="KEGG" id="spt:SPA0602"/>
<dbReference type="HOGENOM" id="CLU_111565_0_0_6"/>
<dbReference type="Proteomes" id="UP000008185">
    <property type="component" value="Chromosome"/>
</dbReference>
<dbReference type="GO" id="GO:0042597">
    <property type="term" value="C:periplasmic space"/>
    <property type="evidence" value="ECO:0007669"/>
    <property type="project" value="UniProtKB-SubCell"/>
</dbReference>
<dbReference type="GO" id="GO:0004867">
    <property type="term" value="F:serine-type endopeptidase inhibitor activity"/>
    <property type="evidence" value="ECO:0007669"/>
    <property type="project" value="UniProtKB-UniRule"/>
</dbReference>
<dbReference type="CDD" id="cd00242">
    <property type="entry name" value="Ecotin"/>
    <property type="match status" value="1"/>
</dbReference>
<dbReference type="FunFam" id="2.60.40.550:FF:000001">
    <property type="entry name" value="Ecotin"/>
    <property type="match status" value="1"/>
</dbReference>
<dbReference type="FunFam" id="4.10.1230.10:FF:000001">
    <property type="entry name" value="Ecotin"/>
    <property type="match status" value="1"/>
</dbReference>
<dbReference type="Gene3D" id="2.60.40.550">
    <property type="entry name" value="Ecotin"/>
    <property type="match status" value="1"/>
</dbReference>
<dbReference type="Gene3D" id="4.10.1230.10">
    <property type="entry name" value="Ecotin, trypsin inhibitor"/>
    <property type="match status" value="1"/>
</dbReference>
<dbReference type="HAMAP" id="MF_00706">
    <property type="entry name" value="Ecotin"/>
    <property type="match status" value="1"/>
</dbReference>
<dbReference type="InterPro" id="IPR027438">
    <property type="entry name" value="Ecotin_C"/>
</dbReference>
<dbReference type="InterPro" id="IPR036198">
    <property type="entry name" value="Ecotin_sf"/>
</dbReference>
<dbReference type="InterPro" id="IPR005658">
    <property type="entry name" value="Prot_inh_ecotin"/>
</dbReference>
<dbReference type="InterPro" id="IPR023084">
    <property type="entry name" value="Prot_inh_ecotin_gammaproteobac"/>
</dbReference>
<dbReference type="NCBIfam" id="NF002987">
    <property type="entry name" value="PRK03719.1"/>
    <property type="match status" value="1"/>
</dbReference>
<dbReference type="PANTHER" id="PTHR35890">
    <property type="match status" value="1"/>
</dbReference>
<dbReference type="PANTHER" id="PTHR35890:SF3">
    <property type="entry name" value="ECOTIN"/>
    <property type="match status" value="1"/>
</dbReference>
<dbReference type="Pfam" id="PF03974">
    <property type="entry name" value="Ecotin"/>
    <property type="match status" value="1"/>
</dbReference>
<dbReference type="PIRSF" id="PIRSF006865">
    <property type="entry name" value="Prot_inh_ecotin"/>
    <property type="match status" value="1"/>
</dbReference>
<dbReference type="SUPFAM" id="SSF49772">
    <property type="entry name" value="Ecotin, trypsin inhibitor"/>
    <property type="match status" value="1"/>
</dbReference>
<sequence>MKMFVPAVVFAALASASAWANNGDTAQPLEKIAPYPQAEKGMKRQVITLTPQQDESTLKVELLIGQTLNVDCNQHRLGGTLETKTLEGWGYDYYVFDNVTSPVSTMMACPDGKKEQKFVTAWLGEDGMVRYNSKLPIVVYTPANVDVKYRIWKADANVQNAVAR</sequence>
<gene>
    <name evidence="1" type="primary">eco</name>
    <name type="ordered locus">SPA0602</name>
</gene>
<keyword id="KW-1015">Disulfide bond</keyword>
<keyword id="KW-0574">Periplasm</keyword>
<keyword id="KW-0646">Protease inhibitor</keyword>
<keyword id="KW-0722">Serine protease inhibitor</keyword>
<keyword id="KW-0732">Signal</keyword>
<name>ECOT_SALPA</name>
<reference key="1">
    <citation type="journal article" date="2004" name="Nat. Genet.">
        <title>Comparison of genome degradation in Paratyphi A and Typhi, human-restricted serovars of Salmonella enterica that cause typhoid.</title>
        <authorList>
            <person name="McClelland M."/>
            <person name="Sanderson K.E."/>
            <person name="Clifton S.W."/>
            <person name="Latreille P."/>
            <person name="Porwollik S."/>
            <person name="Sabo A."/>
            <person name="Meyer R."/>
            <person name="Bieri T."/>
            <person name="Ozersky P."/>
            <person name="McLellan M."/>
            <person name="Harkins C.R."/>
            <person name="Wang C."/>
            <person name="Nguyen C."/>
            <person name="Berghoff A."/>
            <person name="Elliott G."/>
            <person name="Kohlberg S."/>
            <person name="Strong C."/>
            <person name="Du F."/>
            <person name="Carter J."/>
            <person name="Kremizki C."/>
            <person name="Layman D."/>
            <person name="Leonard S."/>
            <person name="Sun H."/>
            <person name="Fulton L."/>
            <person name="Nash W."/>
            <person name="Miner T."/>
            <person name="Minx P."/>
            <person name="Delehaunty K."/>
            <person name="Fronick C."/>
            <person name="Magrini V."/>
            <person name="Nhan M."/>
            <person name="Warren W."/>
            <person name="Florea L."/>
            <person name="Spieth J."/>
            <person name="Wilson R.K."/>
        </authorList>
    </citation>
    <scope>NUCLEOTIDE SEQUENCE [LARGE SCALE GENOMIC DNA]</scope>
    <source>
        <strain>ATCC 9150 / SARB42</strain>
    </source>
</reference>